<dbReference type="EC" id="1.18.1.2"/>
<dbReference type="EMBL" id="LT708304">
    <property type="protein sequence ID" value="SIT99508.1"/>
    <property type="molecule type" value="Genomic_DNA"/>
</dbReference>
<dbReference type="RefSeq" id="NP_854567.1">
    <property type="nucleotide sequence ID" value="NC_002945.3"/>
</dbReference>
<dbReference type="RefSeq" id="WP_003404631.1">
    <property type="nucleotide sequence ID" value="NC_002945.4"/>
</dbReference>
<dbReference type="SMR" id="P65529"/>
<dbReference type="KEGG" id="mbo:BQ2027_MB0910"/>
<dbReference type="PATRIC" id="fig|233413.5.peg.990"/>
<dbReference type="Proteomes" id="UP000001419">
    <property type="component" value="Chromosome"/>
</dbReference>
<dbReference type="GO" id="GO:0051539">
    <property type="term" value="F:4 iron, 4 sulfur cluster binding"/>
    <property type="evidence" value="ECO:0007669"/>
    <property type="project" value="UniProtKB-KW"/>
</dbReference>
<dbReference type="GO" id="GO:0004324">
    <property type="term" value="F:ferredoxin-NADP+ reductase activity"/>
    <property type="evidence" value="ECO:0007669"/>
    <property type="project" value="UniProtKB-EC"/>
</dbReference>
<dbReference type="GO" id="GO:0046872">
    <property type="term" value="F:metal ion binding"/>
    <property type="evidence" value="ECO:0007669"/>
    <property type="project" value="UniProtKB-KW"/>
</dbReference>
<dbReference type="CDD" id="cd04410">
    <property type="entry name" value="DMSOR_beta-like"/>
    <property type="match status" value="1"/>
</dbReference>
<dbReference type="FunFam" id="3.50.50.60:FF:000229">
    <property type="entry name" value="NADPH:adrenodoxin oxidoreductase, mitochondrial"/>
    <property type="match status" value="1"/>
</dbReference>
<dbReference type="Gene3D" id="3.30.70.20">
    <property type="match status" value="1"/>
</dbReference>
<dbReference type="Gene3D" id="3.50.50.60">
    <property type="entry name" value="FAD/NAD(P)-binding domain"/>
    <property type="match status" value="1"/>
</dbReference>
<dbReference type="Gene3D" id="3.40.50.720">
    <property type="entry name" value="NAD(P)-binding Rossmann-like Domain"/>
    <property type="match status" value="1"/>
</dbReference>
<dbReference type="InterPro" id="IPR017896">
    <property type="entry name" value="4Fe4S_Fe-S-bd"/>
</dbReference>
<dbReference type="InterPro" id="IPR017900">
    <property type="entry name" value="4Fe4S_Fe_S_CS"/>
</dbReference>
<dbReference type="InterPro" id="IPR036188">
    <property type="entry name" value="FAD/NAD-bd_sf"/>
</dbReference>
<dbReference type="InterPro" id="IPR023753">
    <property type="entry name" value="FAD/NAD-binding_dom"/>
</dbReference>
<dbReference type="InterPro" id="IPR055275">
    <property type="entry name" value="Ferredox_Rdtase"/>
</dbReference>
<dbReference type="PANTHER" id="PTHR48467">
    <property type="entry name" value="GLUTAMATE SYNTHASE 1 [NADH], CHLOROPLASTIC-LIKE"/>
    <property type="match status" value="1"/>
</dbReference>
<dbReference type="PANTHER" id="PTHR48467:SF1">
    <property type="entry name" value="GLUTAMATE SYNTHASE 1 [NADH], CHLOROPLASTIC-LIKE"/>
    <property type="match status" value="1"/>
</dbReference>
<dbReference type="Pfam" id="PF00037">
    <property type="entry name" value="Fer4"/>
    <property type="match status" value="1"/>
</dbReference>
<dbReference type="Pfam" id="PF07992">
    <property type="entry name" value="Pyr_redox_2"/>
    <property type="match status" value="1"/>
</dbReference>
<dbReference type="PRINTS" id="PR00419">
    <property type="entry name" value="ADXRDTASE"/>
</dbReference>
<dbReference type="SUPFAM" id="SSF54862">
    <property type="entry name" value="4Fe-4S ferredoxins"/>
    <property type="match status" value="1"/>
</dbReference>
<dbReference type="SUPFAM" id="SSF51971">
    <property type="entry name" value="Nucleotide-binding domain"/>
    <property type="match status" value="1"/>
</dbReference>
<dbReference type="PROSITE" id="PS00198">
    <property type="entry name" value="4FE4S_FER_1"/>
    <property type="match status" value="1"/>
</dbReference>
<dbReference type="PROSITE" id="PS51379">
    <property type="entry name" value="4FE4S_FER_2"/>
    <property type="match status" value="2"/>
</dbReference>
<evidence type="ECO:0000250" key="1"/>
<evidence type="ECO:0000255" key="2">
    <source>
        <dbReference type="PROSITE-ProRule" id="PRU00711"/>
    </source>
</evidence>
<evidence type="ECO:0000305" key="3"/>
<accession>P65529</accession>
<accession>A0A1R3XWP3</accession>
<accession>Q10547</accession>
<accession>X2BGE5</accession>
<gene>
    <name type="primary">fprB</name>
    <name type="ordered locus">BQ2027_MB0910</name>
</gene>
<proteinExistence type="inferred from homology"/>
<feature type="chain" id="PRO_0000167675" description="Probable ferredoxin/ferredoxin--NADP reductase">
    <location>
        <begin position="1"/>
        <end position="575"/>
    </location>
</feature>
<feature type="domain" description="4Fe-4S ferredoxin-type 1" evidence="2">
    <location>
        <begin position="2"/>
        <end position="29"/>
    </location>
</feature>
<feature type="domain" description="4Fe-4S ferredoxin-type 2" evidence="2">
    <location>
        <begin position="37"/>
        <end position="66"/>
    </location>
</feature>
<feature type="region of interest" description="Ferredoxin--NADP reductase">
    <location>
        <begin position="115"/>
        <end position="575"/>
    </location>
</feature>
<feature type="binding site" evidence="1">
    <location>
        <position position="9"/>
    </location>
    <ligand>
        <name>[4Fe-4S] cluster</name>
        <dbReference type="ChEBI" id="CHEBI:49883"/>
        <label>1</label>
    </ligand>
</feature>
<feature type="binding site" evidence="1">
    <location>
        <position position="15"/>
    </location>
    <ligand>
        <name>[4Fe-4S] cluster</name>
        <dbReference type="ChEBI" id="CHEBI:49883"/>
        <label>1</label>
    </ligand>
</feature>
<feature type="binding site" evidence="1">
    <location>
        <position position="19"/>
    </location>
    <ligand>
        <name>[4Fe-4S] cluster</name>
        <dbReference type="ChEBI" id="CHEBI:49883"/>
        <label>1</label>
    </ligand>
</feature>
<feature type="binding site" evidence="2">
    <location>
        <position position="46"/>
    </location>
    <ligand>
        <name>[4Fe-4S] cluster</name>
        <dbReference type="ChEBI" id="CHEBI:49883"/>
        <label>2</label>
    </ligand>
</feature>
<feature type="binding site" evidence="2">
    <location>
        <position position="49"/>
    </location>
    <ligand>
        <name>[4Fe-4S] cluster</name>
        <dbReference type="ChEBI" id="CHEBI:49883"/>
        <label>2</label>
    </ligand>
</feature>
<feature type="binding site" evidence="2">
    <location>
        <position position="52"/>
    </location>
    <ligand>
        <name>[4Fe-4S] cluster</name>
        <dbReference type="ChEBI" id="CHEBI:49883"/>
        <label>2</label>
    </ligand>
</feature>
<feature type="binding site" evidence="2">
    <location>
        <position position="56"/>
    </location>
    <ligand>
        <name>[4Fe-4S] cluster</name>
        <dbReference type="ChEBI" id="CHEBI:49883"/>
        <label>2</label>
    </ligand>
</feature>
<feature type="binding site" evidence="1">
    <location>
        <position position="123"/>
    </location>
    <ligand>
        <name>FAD</name>
        <dbReference type="ChEBI" id="CHEBI:57692"/>
    </ligand>
</feature>
<feature type="binding site" evidence="1">
    <location>
        <position position="143"/>
    </location>
    <ligand>
        <name>FAD</name>
        <dbReference type="ChEBI" id="CHEBI:57692"/>
    </ligand>
</feature>
<feature type="binding site" evidence="1">
    <location>
        <position position="151"/>
    </location>
    <ligand>
        <name>FAD</name>
        <dbReference type="ChEBI" id="CHEBI:57692"/>
    </ligand>
</feature>
<feature type="binding site" evidence="1">
    <location>
        <position position="187"/>
    </location>
    <ligand>
        <name>FAD</name>
        <dbReference type="ChEBI" id="CHEBI:57692"/>
    </ligand>
</feature>
<feature type="binding site" evidence="1">
    <location>
        <position position="213"/>
    </location>
    <ligand>
        <name>NADP(+)</name>
        <dbReference type="ChEBI" id="CHEBI:58349"/>
    </ligand>
</feature>
<feature type="binding site" evidence="1">
    <location>
        <begin position="258"/>
        <end position="261"/>
    </location>
    <ligand>
        <name>NADP(+)</name>
        <dbReference type="ChEBI" id="CHEBI:58349"/>
    </ligand>
</feature>
<feature type="binding site" evidence="1">
    <location>
        <begin position="302"/>
        <end position="303"/>
    </location>
    <ligand>
        <name>NADP(+)</name>
        <dbReference type="ChEBI" id="CHEBI:58349"/>
    </ligand>
</feature>
<feature type="binding site" evidence="1">
    <location>
        <position position="314"/>
    </location>
    <ligand>
        <name>NADP(+)</name>
        <dbReference type="ChEBI" id="CHEBI:58349"/>
    </ligand>
</feature>
<feature type="binding site" evidence="1">
    <location>
        <position position="456"/>
    </location>
    <ligand>
        <name>FAD</name>
        <dbReference type="ChEBI" id="CHEBI:57692"/>
    </ligand>
</feature>
<feature type="binding site" evidence="1">
    <location>
        <begin position="463"/>
        <end position="465"/>
    </location>
    <ligand>
        <name>FAD</name>
        <dbReference type="ChEBI" id="CHEBI:57692"/>
    </ligand>
</feature>
<feature type="binding site" evidence="1">
    <location>
        <position position="463"/>
    </location>
    <ligand>
        <name>NADP(+)</name>
        <dbReference type="ChEBI" id="CHEBI:58349"/>
    </ligand>
</feature>
<organism>
    <name type="scientific">Mycobacterium bovis (strain ATCC BAA-935 / AF2122/97)</name>
    <dbReference type="NCBI Taxonomy" id="233413"/>
    <lineage>
        <taxon>Bacteria</taxon>
        <taxon>Bacillati</taxon>
        <taxon>Actinomycetota</taxon>
        <taxon>Actinomycetes</taxon>
        <taxon>Mycobacteriales</taxon>
        <taxon>Mycobacteriaceae</taxon>
        <taxon>Mycobacterium</taxon>
        <taxon>Mycobacterium tuberculosis complex</taxon>
    </lineage>
</organism>
<keyword id="KW-0004">4Fe-4S</keyword>
<keyword id="KW-0249">Electron transport</keyword>
<keyword id="KW-0274">FAD</keyword>
<keyword id="KW-0285">Flavoprotein</keyword>
<keyword id="KW-0408">Iron</keyword>
<keyword id="KW-0411">Iron-sulfur</keyword>
<keyword id="KW-0479">Metal-binding</keyword>
<keyword id="KW-0521">NADP</keyword>
<keyword id="KW-0560">Oxidoreductase</keyword>
<keyword id="KW-1185">Reference proteome</keyword>
<keyword id="KW-0677">Repeat</keyword>
<keyword id="KW-0813">Transport</keyword>
<name>FPRB_MYCBO</name>
<reference key="1">
    <citation type="journal article" date="2003" name="Proc. Natl. Acad. Sci. U.S.A.">
        <title>The complete genome sequence of Mycobacterium bovis.</title>
        <authorList>
            <person name="Garnier T."/>
            <person name="Eiglmeier K."/>
            <person name="Camus J.-C."/>
            <person name="Medina N."/>
            <person name="Mansoor H."/>
            <person name="Pryor M."/>
            <person name="Duthoy S."/>
            <person name="Grondin S."/>
            <person name="Lacroix C."/>
            <person name="Monsempe C."/>
            <person name="Simon S."/>
            <person name="Harris B."/>
            <person name="Atkin R."/>
            <person name="Doggett J."/>
            <person name="Mayes R."/>
            <person name="Keating L."/>
            <person name="Wheeler P.R."/>
            <person name="Parkhill J."/>
            <person name="Barrell B.G."/>
            <person name="Cole S.T."/>
            <person name="Gordon S.V."/>
            <person name="Hewinson R.G."/>
        </authorList>
    </citation>
    <scope>NUCLEOTIDE SEQUENCE [LARGE SCALE GENOMIC DNA]</scope>
    <source>
        <strain>ATCC BAA-935 / AF2122/97</strain>
    </source>
</reference>
<reference key="2">
    <citation type="journal article" date="2017" name="Genome Announc.">
        <title>Updated reference genome sequence and annotation of Mycobacterium bovis AF2122/97.</title>
        <authorList>
            <person name="Malone K.M."/>
            <person name="Farrell D."/>
            <person name="Stuber T.P."/>
            <person name="Schubert O.T."/>
            <person name="Aebersold R."/>
            <person name="Robbe-Austerman S."/>
            <person name="Gordon S.V."/>
        </authorList>
    </citation>
    <scope>NUCLEOTIDE SEQUENCE [LARGE SCALE GENOMIC DNA]</scope>
    <scope>GENOME REANNOTATION</scope>
    <source>
        <strain>ATCC BAA-935 / AF2122/97</strain>
    </source>
</reference>
<protein>
    <recommendedName>
        <fullName>Probable ferredoxin/ferredoxin--NADP reductase</fullName>
        <shortName>FNR</shortName>
        <ecNumber>1.18.1.2</ecNumber>
    </recommendedName>
</protein>
<sequence>MPHVITQSCCNDASCVFACPVNCIHPTPDEPGFATSEMLYIDPVACVDCGACVTACPVSAIAPNTRLDFEQLPFVEINASYYPKRPAGVKLAPTSKLAPVTPAAEVRVRRQPLTVAVVGSGPAAMYAADELLVQQGVQVNVFEKLPTPYGLVRSGVAPDHQNTKRVTRLFDRIAGHRRFRFYLNVEIGKHLGHAELLAHHHAVLYAVGAPDDRRLTIDGMGLPGTGTATELVAWLNGHPDFNDLPVDLSHERVVIIGNGNVALDVARVLAADPHELAATDIADHALSALRNSAVREVVVAARRGPAHSAFTLPELIGLTAGADVVLDPGDHQRVLDDLAIVADPLTRNKLEILSTLGDGSAPARRVGRPRIRLAYRLTPRRVLGQRRAGGVQFSVTGTDELRQLDAGLVLTSIGYRGKPIPDLPFDEQAALVPNDGGRVIDPGTGEPVPGAYVAGWIKRGPTGFIGTNKSCSMQTVQALVADFNDGRLTDPVATPTALDQLVQARQPQAIGCAGWRAIDAAEIARGSADGRVRNKFTDVAEMLAAATSAPKEPLRRRVLARLRDLGQPIVLTVPL</sequence>
<comment type="catalytic activity">
    <reaction>
        <text>2 reduced [2Fe-2S]-[ferredoxin] + NADP(+) + H(+) = 2 oxidized [2Fe-2S]-[ferredoxin] + NADPH</text>
        <dbReference type="Rhea" id="RHEA:20125"/>
        <dbReference type="Rhea" id="RHEA-COMP:10000"/>
        <dbReference type="Rhea" id="RHEA-COMP:10001"/>
        <dbReference type="ChEBI" id="CHEBI:15378"/>
        <dbReference type="ChEBI" id="CHEBI:33737"/>
        <dbReference type="ChEBI" id="CHEBI:33738"/>
        <dbReference type="ChEBI" id="CHEBI:57783"/>
        <dbReference type="ChEBI" id="CHEBI:58349"/>
        <dbReference type="EC" id="1.18.1.2"/>
    </reaction>
</comment>
<comment type="cofactor">
    <cofactor>
        <name>[4Fe-4S] cluster</name>
        <dbReference type="ChEBI" id="CHEBI:49883"/>
    </cofactor>
    <text>Binds 1 or 2 [4Fe-4S] clusters.</text>
</comment>
<comment type="cofactor">
    <cofactor>
        <name>FAD</name>
        <dbReference type="ChEBI" id="CHEBI:57692"/>
    </cofactor>
</comment>
<comment type="similarity">
    <text evidence="3">In the C-terminal section; belongs to the ferredoxin--NADP reductase family.</text>
</comment>